<proteinExistence type="evidence at protein level"/>
<reference key="1">
    <citation type="submission" date="2008-01" db="EMBL/GenBank/DDBJ databases">
        <title>Complete sequence of Thermoanaerobacter sp. X514.</title>
        <authorList>
            <consortium name="US DOE Joint Genome Institute"/>
            <person name="Copeland A."/>
            <person name="Lucas S."/>
            <person name="Lapidus A."/>
            <person name="Barry K."/>
            <person name="Glavina del Rio T."/>
            <person name="Dalin E."/>
            <person name="Tice H."/>
            <person name="Pitluck S."/>
            <person name="Bruce D."/>
            <person name="Goodwin L."/>
            <person name="Saunders E."/>
            <person name="Brettin T."/>
            <person name="Detter J.C."/>
            <person name="Han C."/>
            <person name="Schmutz J."/>
            <person name="Larimer F."/>
            <person name="Land M."/>
            <person name="Hauser L."/>
            <person name="Kyrpides N."/>
            <person name="Kim E."/>
            <person name="Hemme C."/>
            <person name="Fields M.W."/>
            <person name="He Z."/>
            <person name="Zhou J."/>
            <person name="Richardson P."/>
        </authorList>
    </citation>
    <scope>NUCLEOTIDE SEQUENCE [LARGE SCALE GENOMIC DNA]</scope>
    <source>
        <strain>X514</strain>
    </source>
</reference>
<reference key="2">
    <citation type="journal article" date="2014" name="PLoS ONE">
        <title>Discovery of two beta-1,2-mannoside phosphorylases showing different chain-length specificities from Thermoanaerobacter sp. X-514.</title>
        <authorList>
            <person name="Chiku K."/>
            <person name="Nihira T."/>
            <person name="Suzuki E."/>
            <person name="Nishimoto M."/>
            <person name="Kitaoka M."/>
            <person name="Ohtsubo K."/>
            <person name="Nakai H."/>
        </authorList>
    </citation>
    <scope>FUNCTION</scope>
    <scope>CATALYTIC ACTIVITY</scope>
    <scope>BIOPHYSICOCHEMICAL PROPERTIES</scope>
    <scope>PATHWAY</scope>
    <scope>SUBUNIT</scope>
    <source>
        <strain>X514</strain>
    </source>
</reference>
<feature type="chain" id="PRO_0000452512" description="1,2-beta-oligomannan phosphorylase">
    <location>
        <begin position="1"/>
        <end position="296"/>
    </location>
</feature>
<name>BOLMP_THEPX</name>
<evidence type="ECO:0000269" key="1">
    <source>
    </source>
</evidence>
<evidence type="ECO:0000303" key="2">
    <source>
    </source>
</evidence>
<evidence type="ECO:0000305" key="3"/>
<evidence type="ECO:0000312" key="4">
    <source>
        <dbReference type="EMBL" id="ABY93073.1"/>
    </source>
</evidence>
<comment type="function">
    <text evidence="1">Probably involved in a salvage pathway for GDP-D-mannose biosynthesis (PubMed:25500577). Catalyzes the reversible phosphorolysis of 1,2-beta-oligomannan. In phosphorolytic reactions, prefers 1,2-beta-oligomannan with a degree of polymerization (DP) of 3, 4 and 5. Produces alpha-D-mannose 1-phosphate, which is the precursor of GDP-D-mannose (PubMed:25500577).</text>
</comment>
<comment type="catalytic activity">
    <reaction evidence="1">
        <text>[(1-&gt;2)-beta-D-mannosyl](n) + phosphate = [(1-&gt;2)-beta-D-mannosyl](n-1) + alpha-D-mannose 1-phosphate</text>
        <dbReference type="Rhea" id="RHEA:49408"/>
        <dbReference type="Rhea" id="RHEA-COMP:12390"/>
        <dbReference type="Rhea" id="RHEA-COMP:12391"/>
        <dbReference type="ChEBI" id="CHEBI:43474"/>
        <dbReference type="ChEBI" id="CHEBI:58409"/>
        <dbReference type="ChEBI" id="CHEBI:59573"/>
        <dbReference type="EC" id="2.4.1.340"/>
    </reaction>
    <physiologicalReaction direction="left-to-right" evidence="1">
        <dbReference type="Rhea" id="RHEA:49409"/>
    </physiologicalReaction>
</comment>
<comment type="biophysicochemical properties">
    <kinetics>
        <KM evidence="1">0.41 mM for D-mannose (for the synthetic reaction)</KM>
        <KM evidence="1">0.2 mM for D-fructose (for the synthetic reaction)</KM>
        <KM evidence="1">0.77 mM for beta-1,2-mannobiose (beta-1,2-Man2) (for the synthetic reaction)</KM>
        <KM evidence="1">1.2 mM for beta-D-mannopyranosyl-(1-&gt;2)-beta-D-mannopyranosyl-(1-&gt;2)-D-mannose (beta-1,2-Man3) (for the synthetic reaction)</KM>
        <KM evidence="1">1.4 mM for alpha-D-mannose 1-phosphate (for the synthetic reaction)</KM>
        <text evidence="1">kcat is 1.9 sec(-1) with D-mannose as substrate (for the synthetic reaction). kcat is 2.0 sec(-1) with D-fructose as substrate (for the synthetic reaction). kcat is 25 sec(-1) with beta-1,2-Man2 as substrate (for the synthetic reaction). kcat is 43 sec(-1) with beta-1,2-Man3 as substrate (for the synthetic reaction). kcat is 22 sec(-1) with alpha-D-mannose 1-phosphate as substrate (for the synthetic reaction).</text>
    </kinetics>
    <phDependence>
        <text evidence="1">Optimum pH is 6.0 for phosphorolytic activity. Optimum pH is 5.0 for the synthetic reaction.</text>
    </phDependence>
</comment>
<comment type="pathway">
    <text>Nucleotide-sugar biosynthesis; GDP-alpha-D-mannose biosynthesis.</text>
</comment>
<comment type="subunit">
    <text evidence="1">Homodimer.</text>
</comment>
<comment type="similarity">
    <text evidence="3">Belongs to the glycosyl hydrolase 130 family.</text>
</comment>
<gene>
    <name evidence="4" type="ordered locus">Teth514_1788</name>
</gene>
<keyword id="KW-0119">Carbohydrate metabolism</keyword>
<keyword id="KW-0328">Glycosyltransferase</keyword>
<keyword id="KW-0808">Transferase</keyword>
<protein>
    <recommendedName>
        <fullName evidence="2">1,2-beta-oligomannan phosphorylase</fullName>
        <ecNumber evidence="1">2.4.1.340</ecNumber>
    </recommendedName>
    <alternativeName>
        <fullName evidence="2">1,2-beta-oligomannan:phosphate alpha-D-mannosyltransferase</fullName>
    </alternativeName>
</protein>
<accession>B0K2C2</accession>
<dbReference type="EC" id="2.4.1.340" evidence="1"/>
<dbReference type="EMBL" id="CP000923">
    <property type="protein sequence ID" value="ABY93073.1"/>
    <property type="molecule type" value="Genomic_DNA"/>
</dbReference>
<dbReference type="RefSeq" id="WP_009052014.1">
    <property type="nucleotide sequence ID" value="NC_010320.1"/>
</dbReference>
<dbReference type="SMR" id="B0K2C2"/>
<dbReference type="CAZy" id="GH130">
    <property type="family name" value="Glycoside Hydrolase Family 130"/>
</dbReference>
<dbReference type="KEGG" id="tex:Teth514_1788"/>
<dbReference type="HOGENOM" id="CLU_046648_0_0_9"/>
<dbReference type="BioCyc" id="MetaCyc:MONOMER-19745"/>
<dbReference type="BRENDA" id="2.4.1.340">
    <property type="organism ID" value="5468"/>
</dbReference>
<dbReference type="UniPathway" id="UPA00126"/>
<dbReference type="Proteomes" id="UP000002155">
    <property type="component" value="Chromosome"/>
</dbReference>
<dbReference type="GO" id="GO:0016757">
    <property type="term" value="F:glycosyltransferase activity"/>
    <property type="evidence" value="ECO:0007669"/>
    <property type="project" value="UniProtKB-KW"/>
</dbReference>
<dbReference type="GO" id="GO:0009298">
    <property type="term" value="P:GDP-mannose biosynthetic process"/>
    <property type="evidence" value="ECO:0007669"/>
    <property type="project" value="UniProtKB-UniPathway"/>
</dbReference>
<dbReference type="CDD" id="cd18614">
    <property type="entry name" value="GH130"/>
    <property type="match status" value="1"/>
</dbReference>
<dbReference type="Gene3D" id="2.115.10.20">
    <property type="entry name" value="Glycosyl hydrolase domain, family 43"/>
    <property type="match status" value="1"/>
</dbReference>
<dbReference type="InterPro" id="IPR023296">
    <property type="entry name" value="Glyco_hydro_beta-prop_sf"/>
</dbReference>
<dbReference type="InterPro" id="IPR007184">
    <property type="entry name" value="Mannoside_phosphorylase"/>
</dbReference>
<dbReference type="PANTHER" id="PTHR34106">
    <property type="entry name" value="GLYCOSIDASE"/>
    <property type="match status" value="1"/>
</dbReference>
<dbReference type="PANTHER" id="PTHR34106:SF5">
    <property type="entry name" value="GLYCOSIDASE"/>
    <property type="match status" value="1"/>
</dbReference>
<dbReference type="Pfam" id="PF04041">
    <property type="entry name" value="Glyco_hydro_130"/>
    <property type="match status" value="1"/>
</dbReference>
<dbReference type="PIRSF" id="PIRSF016202">
    <property type="entry name" value="PH1107"/>
    <property type="match status" value="1"/>
</dbReference>
<dbReference type="SUPFAM" id="SSF75005">
    <property type="entry name" value="Arabinanase/levansucrase/invertase"/>
    <property type="match status" value="1"/>
</dbReference>
<organism>
    <name type="scientific">Thermoanaerobacter sp. (strain X514)</name>
    <dbReference type="NCBI Taxonomy" id="399726"/>
    <lineage>
        <taxon>Bacteria</taxon>
        <taxon>Bacillati</taxon>
        <taxon>Bacillota</taxon>
        <taxon>Clostridia</taxon>
        <taxon>Thermoanaerobacterales</taxon>
        <taxon>Thermoanaerobacteraceae</taxon>
        <taxon>Thermoanaerobacter</taxon>
    </lineage>
</organism>
<sequence>MIKLKRLSDKPVLMPKAENEWERAAVFNTAAIYDNGLFHLIYRATDIGPHAKYGKYISRLGYAVSKDGINFMRLDKPVMSNETEQELRGLEDPRIVKIDGIYYMMYTGFGDRFQDDYRICLATSKNLIDWERKGVVLDEPNKDASLFPEKINGKYVMLHRRYPDIWIAFSDDLKNWYDHKPILKPIPNTWESARVGIGGPPIKTKDGWFLIYHAADDNNVYRLGAVLLDLEDPSKVIARQKEPILEPELGWEKEGYIPNVVFSCGNAVKDDTIYVYYGGADTVIGVAILEMKDIKF</sequence>